<reference key="1">
    <citation type="journal article" date="2008" name="Appl. Environ. Microbiol.">
        <title>The genome of Polaromonas sp. strain JS666: insights into the evolution of a hydrocarbon- and xenobiotic-degrading bacterium, and features of relevance to biotechnology.</title>
        <authorList>
            <person name="Mattes T.E."/>
            <person name="Alexander A.K."/>
            <person name="Richardson P.M."/>
            <person name="Munk A.C."/>
            <person name="Han C.S."/>
            <person name="Stothard P."/>
            <person name="Coleman N.V."/>
        </authorList>
    </citation>
    <scope>NUCLEOTIDE SEQUENCE [LARGE SCALE GENOMIC DNA]</scope>
    <source>
        <strain>JS666 / ATCC BAA-500</strain>
    </source>
</reference>
<organism>
    <name type="scientific">Polaromonas sp. (strain JS666 / ATCC BAA-500)</name>
    <dbReference type="NCBI Taxonomy" id="296591"/>
    <lineage>
        <taxon>Bacteria</taxon>
        <taxon>Pseudomonadati</taxon>
        <taxon>Pseudomonadota</taxon>
        <taxon>Betaproteobacteria</taxon>
        <taxon>Burkholderiales</taxon>
        <taxon>Comamonadaceae</taxon>
        <taxon>Polaromonas</taxon>
    </lineage>
</organism>
<evidence type="ECO:0000255" key="1">
    <source>
        <dbReference type="HAMAP-Rule" id="MF_00380"/>
    </source>
</evidence>
<comment type="function">
    <text evidence="1">This protein is one of the two subunits of integration host factor, a specific DNA-binding protein that functions in genetic recombination as well as in transcriptional and translational control.</text>
</comment>
<comment type="subunit">
    <text evidence="1">Heterodimer of an alpha and a beta chain.</text>
</comment>
<comment type="similarity">
    <text evidence="1">Belongs to the bacterial histone-like protein family.</text>
</comment>
<sequence>MEFSVESLETPALTKAHLAELLFEQIGLNKRESKDMIDAFFDLISDSLVDGNDVKISGFGNFQIRTKAPRPGRNPRTGEAIPIQARRVVTFHASHKLKDQIQGDSAADIAE</sequence>
<gene>
    <name evidence="1" type="primary">ihfA</name>
    <name evidence="1" type="synonym">himA</name>
    <name type="ordered locus">Bpro_2108</name>
</gene>
<name>IHFA_POLSJ</name>
<protein>
    <recommendedName>
        <fullName evidence="1">Integration host factor subunit alpha</fullName>
        <shortName evidence="1">IHF-alpha</shortName>
    </recommendedName>
</protein>
<proteinExistence type="inferred from homology"/>
<accession>Q12BQ7</accession>
<dbReference type="EMBL" id="CP000316">
    <property type="protein sequence ID" value="ABE44035.1"/>
    <property type="molecule type" value="Genomic_DNA"/>
</dbReference>
<dbReference type="RefSeq" id="WP_011483033.1">
    <property type="nucleotide sequence ID" value="NC_007948.1"/>
</dbReference>
<dbReference type="SMR" id="Q12BQ7"/>
<dbReference type="STRING" id="296591.Bpro_2108"/>
<dbReference type="KEGG" id="pol:Bpro_2108"/>
<dbReference type="eggNOG" id="COG0776">
    <property type="taxonomic scope" value="Bacteria"/>
</dbReference>
<dbReference type="HOGENOM" id="CLU_105066_1_0_4"/>
<dbReference type="OrthoDB" id="9797747at2"/>
<dbReference type="Proteomes" id="UP000001983">
    <property type="component" value="Chromosome"/>
</dbReference>
<dbReference type="GO" id="GO:0005829">
    <property type="term" value="C:cytosol"/>
    <property type="evidence" value="ECO:0007669"/>
    <property type="project" value="TreeGrafter"/>
</dbReference>
<dbReference type="GO" id="GO:0003677">
    <property type="term" value="F:DNA binding"/>
    <property type="evidence" value="ECO:0007669"/>
    <property type="project" value="UniProtKB-UniRule"/>
</dbReference>
<dbReference type="GO" id="GO:0030527">
    <property type="term" value="F:structural constituent of chromatin"/>
    <property type="evidence" value="ECO:0007669"/>
    <property type="project" value="InterPro"/>
</dbReference>
<dbReference type="GO" id="GO:0006310">
    <property type="term" value="P:DNA recombination"/>
    <property type="evidence" value="ECO:0007669"/>
    <property type="project" value="UniProtKB-UniRule"/>
</dbReference>
<dbReference type="GO" id="GO:0009893">
    <property type="term" value="P:positive regulation of metabolic process"/>
    <property type="evidence" value="ECO:0007669"/>
    <property type="project" value="UniProtKB-ARBA"/>
</dbReference>
<dbReference type="GO" id="GO:0006355">
    <property type="term" value="P:regulation of DNA-templated transcription"/>
    <property type="evidence" value="ECO:0007669"/>
    <property type="project" value="UniProtKB-UniRule"/>
</dbReference>
<dbReference type="GO" id="GO:0006417">
    <property type="term" value="P:regulation of translation"/>
    <property type="evidence" value="ECO:0007669"/>
    <property type="project" value="UniProtKB-UniRule"/>
</dbReference>
<dbReference type="CDD" id="cd13835">
    <property type="entry name" value="IHF_A"/>
    <property type="match status" value="1"/>
</dbReference>
<dbReference type="Gene3D" id="4.10.520.10">
    <property type="entry name" value="IHF-like DNA-binding proteins"/>
    <property type="match status" value="1"/>
</dbReference>
<dbReference type="HAMAP" id="MF_00380">
    <property type="entry name" value="IHF_alpha"/>
    <property type="match status" value="1"/>
</dbReference>
<dbReference type="InterPro" id="IPR000119">
    <property type="entry name" value="Hist_DNA-bd"/>
</dbReference>
<dbReference type="InterPro" id="IPR020816">
    <property type="entry name" value="Histone-like_DNA-bd_CS"/>
</dbReference>
<dbReference type="InterPro" id="IPR010992">
    <property type="entry name" value="IHF-like_DNA-bd_dom_sf"/>
</dbReference>
<dbReference type="InterPro" id="IPR005684">
    <property type="entry name" value="IHF_alpha"/>
</dbReference>
<dbReference type="NCBIfam" id="TIGR00987">
    <property type="entry name" value="himA"/>
    <property type="match status" value="1"/>
</dbReference>
<dbReference type="NCBIfam" id="NF001401">
    <property type="entry name" value="PRK00285.1"/>
    <property type="match status" value="1"/>
</dbReference>
<dbReference type="PANTHER" id="PTHR33175">
    <property type="entry name" value="DNA-BINDING PROTEIN HU"/>
    <property type="match status" value="1"/>
</dbReference>
<dbReference type="PANTHER" id="PTHR33175:SF2">
    <property type="entry name" value="INTEGRATION HOST FACTOR SUBUNIT ALPHA"/>
    <property type="match status" value="1"/>
</dbReference>
<dbReference type="Pfam" id="PF00216">
    <property type="entry name" value="Bac_DNA_binding"/>
    <property type="match status" value="1"/>
</dbReference>
<dbReference type="PRINTS" id="PR01727">
    <property type="entry name" value="DNABINDINGHU"/>
</dbReference>
<dbReference type="SMART" id="SM00411">
    <property type="entry name" value="BHL"/>
    <property type="match status" value="1"/>
</dbReference>
<dbReference type="SUPFAM" id="SSF47729">
    <property type="entry name" value="IHF-like DNA-binding proteins"/>
    <property type="match status" value="1"/>
</dbReference>
<dbReference type="PROSITE" id="PS00045">
    <property type="entry name" value="HISTONE_LIKE"/>
    <property type="match status" value="1"/>
</dbReference>
<keyword id="KW-0233">DNA recombination</keyword>
<keyword id="KW-0238">DNA-binding</keyword>
<keyword id="KW-1185">Reference proteome</keyword>
<keyword id="KW-0804">Transcription</keyword>
<keyword id="KW-0805">Transcription regulation</keyword>
<keyword id="KW-0810">Translation regulation</keyword>
<feature type="chain" id="PRO_0000277753" description="Integration host factor subunit alpha">
    <location>
        <begin position="1"/>
        <end position="111"/>
    </location>
</feature>